<gene>
    <name evidence="6" type="primary">Abcd4</name>
    <name type="synonym">Pxmp1l</name>
</gene>
<name>ABCD4_MOUSE</name>
<comment type="function">
    <text evidence="1">Lysosomal membrane protein that transports cobalamin (Vitamin B12) from the lysosomal lumen to the cytosol in an ATP-dependent manner. Targeted by LMBRD1 lysosomal chaperone from the endoplasmic reticulum to the lysosomal membrane. Then forms a complex with lysosomal chaperone LMBRD1 and cytosolic MMACHC to transport cobalamin across the lysosomal membrane.</text>
</comment>
<comment type="catalytic activity">
    <reaction evidence="1">
        <text>an R-cob(III)alamin(out) + ATP + H2O = an R-cob(III)alamin(in) + ADP + phosphate + H(+)</text>
        <dbReference type="Rhea" id="RHEA:17873"/>
        <dbReference type="ChEBI" id="CHEBI:15377"/>
        <dbReference type="ChEBI" id="CHEBI:15378"/>
        <dbReference type="ChEBI" id="CHEBI:30616"/>
        <dbReference type="ChEBI" id="CHEBI:43474"/>
        <dbReference type="ChEBI" id="CHEBI:140785"/>
        <dbReference type="ChEBI" id="CHEBI:456216"/>
        <dbReference type="EC" id="7.6.2.8"/>
    </reaction>
    <physiologicalReaction direction="left-to-right" evidence="1">
        <dbReference type="Rhea" id="RHEA:17874"/>
    </physiologicalReaction>
</comment>
<comment type="subunit">
    <text evidence="1">Homodimer or heterodimer. Interacts with LMBRD1; this interaction induces the translocation of ABCD4 from the ER to the lysosome membrane. Interacts with LMBRD1 and MMACHC; this interaction ensures the transport of cobalamin from the lysosome to the cytosol.</text>
</comment>
<comment type="subcellular location">
    <subcellularLocation>
        <location evidence="1">Endoplasmic reticulum membrane</location>
        <topology evidence="2">Multi-pass membrane protein</topology>
    </subcellularLocation>
    <subcellularLocation>
        <location evidence="1">Lysosome membrane</location>
        <topology evidence="2">Multi-pass membrane protein</topology>
    </subcellularLocation>
</comment>
<comment type="similarity">
    <text evidence="5">Belongs to the ABC transporter superfamily. ABCD family. Peroxisomal fatty acyl CoA transporter (TC 3.A.1.203) subfamily.</text>
</comment>
<comment type="caution">
    <text evidence="1">Originally proposed to be a peroxisomal protein (By similarity). Recent studies have suggested its localization to the endoplasmic reticulum and within the lysosome (By similarity).</text>
</comment>
<proteinExistence type="evidence at protein level"/>
<sequence>MAVPGPTARAGARPRLDLQLVQRFVRIQKVFFPSWSSQNVLMFMTLLCVTLLEQLVIYQVGLIPSQYYGVLGNKDLDGFKALTLLAVTLIVLNSTLKSFDQFTCNLLYVSWRKDLTEHLHHLYFRARVYYTLNVLRDDIDNPDQRISQDVERFCRQLSSVTSKLIISPFTLTYYTYQCFQSTGWLGPVSIFGYFIVGTMVNKTLMGPIVTKLVQQEKLEGDFRFKHMQIRVNAEPAAFYRAGLVEHMRTDRRLQRLLQTQRELMSRELWLYIGINTFDYLGSILSYVVIAIPIFSGVYGDLSPTELSTLVSKNAFVCIYLISCFTQLIDLSTTLSDVAGYTHRIGELQEALLDMSRKSQDCEALGESEWDLDKTPGCPTTEPSDTAFLLDRVSILAPSSDKPLIKDLSLKICEGQSLLITGNTGTGKTSLLRVLGGLWEGMKGSVQMLADFGPHGVLFLPQKPFFTDGTLREQVIYPLKEIYPDSGSADDERIVRFLELAGLSSLVARTGGLDQQVDWNWYDVLSPGEMQRLSFARLFYLQPKYAVLDEATSALTEEAESELYRIGQQLGMTFISVGHRPSLEKFHSWVLRLHGGGSWELTRIKLE</sequence>
<accession>O89016</accession>
<accession>E9QKU3</accession>
<dbReference type="EC" id="7.6.2.8" evidence="1"/>
<dbReference type="EMBL" id="AJ001166">
    <property type="protein sequence ID" value="CAA04570.1"/>
    <property type="molecule type" value="mRNA"/>
</dbReference>
<dbReference type="EMBL" id="AC110564">
    <property type="status" value="NOT_ANNOTATED_CDS"/>
    <property type="molecule type" value="Genomic_DNA"/>
</dbReference>
<dbReference type="CCDS" id="CCDS26047.1"/>
<dbReference type="RefSeq" id="NP_033018.2">
    <property type="nucleotide sequence ID" value="NM_008992.3"/>
</dbReference>
<dbReference type="SMR" id="O89016"/>
<dbReference type="FunCoup" id="O89016">
    <property type="interactions" value="1421"/>
</dbReference>
<dbReference type="STRING" id="10090.ENSMUSP00000021666"/>
<dbReference type="GlyGen" id="O89016">
    <property type="glycosylation" value="1 site"/>
</dbReference>
<dbReference type="iPTMnet" id="O89016"/>
<dbReference type="PhosphoSitePlus" id="O89016"/>
<dbReference type="PaxDb" id="10090-ENSMUSP00000021666"/>
<dbReference type="PeptideAtlas" id="O89016"/>
<dbReference type="ProteomicsDB" id="285956"/>
<dbReference type="Pumba" id="O89016"/>
<dbReference type="Antibodypedia" id="184">
    <property type="antibodies" value="232 antibodies from 29 providers"/>
</dbReference>
<dbReference type="DNASU" id="19300"/>
<dbReference type="Ensembl" id="ENSMUST00000021666.6">
    <property type="protein sequence ID" value="ENSMUSP00000021666.5"/>
    <property type="gene ID" value="ENSMUSG00000021240.7"/>
</dbReference>
<dbReference type="GeneID" id="19300"/>
<dbReference type="KEGG" id="mmu:19300"/>
<dbReference type="UCSC" id="uc007ofo.2">
    <property type="organism name" value="mouse"/>
</dbReference>
<dbReference type="AGR" id="MGI:1349217"/>
<dbReference type="CTD" id="5826"/>
<dbReference type="MGI" id="MGI:1349217">
    <property type="gene designation" value="Abcd4"/>
</dbReference>
<dbReference type="VEuPathDB" id="HostDB:ENSMUSG00000021240"/>
<dbReference type="eggNOG" id="KOG0060">
    <property type="taxonomic scope" value="Eukaryota"/>
</dbReference>
<dbReference type="GeneTree" id="ENSGT00950000182955"/>
<dbReference type="HOGENOM" id="CLU_007587_7_0_1"/>
<dbReference type="InParanoid" id="O89016"/>
<dbReference type="OMA" id="KQFHDME"/>
<dbReference type="OrthoDB" id="422637at2759"/>
<dbReference type="PhylomeDB" id="O89016"/>
<dbReference type="TreeFam" id="TF105205"/>
<dbReference type="Reactome" id="R-MMU-9758881">
    <property type="pathway name" value="Uptake of dietary cobalamins into enterocytes"/>
</dbReference>
<dbReference type="Reactome" id="R-MMU-9758890">
    <property type="pathway name" value="Transport of RCbl within the body"/>
</dbReference>
<dbReference type="BioGRID-ORCS" id="19300">
    <property type="hits" value="5 hits in 78 CRISPR screens"/>
</dbReference>
<dbReference type="ChiTaRS" id="Abcd4">
    <property type="organism name" value="mouse"/>
</dbReference>
<dbReference type="PRO" id="PR:O89016"/>
<dbReference type="Proteomes" id="UP000000589">
    <property type="component" value="Chromosome 12"/>
</dbReference>
<dbReference type="RNAct" id="O89016">
    <property type="molecule type" value="protein"/>
</dbReference>
<dbReference type="Bgee" id="ENSMUSG00000021240">
    <property type="expression patterns" value="Expressed in metanephric proximal tubule and 217 other cell types or tissues"/>
</dbReference>
<dbReference type="ExpressionAtlas" id="O89016">
    <property type="expression patterns" value="baseline and differential"/>
</dbReference>
<dbReference type="GO" id="GO:0005789">
    <property type="term" value="C:endoplasmic reticulum membrane"/>
    <property type="evidence" value="ECO:0000314"/>
    <property type="project" value="UniProtKB"/>
</dbReference>
<dbReference type="GO" id="GO:0005765">
    <property type="term" value="C:lysosomal membrane"/>
    <property type="evidence" value="ECO:0000250"/>
    <property type="project" value="UniProtKB"/>
</dbReference>
<dbReference type="GO" id="GO:0015420">
    <property type="term" value="F:ABC-type vitamin B12 transporter activity"/>
    <property type="evidence" value="ECO:0000250"/>
    <property type="project" value="UniProtKB"/>
</dbReference>
<dbReference type="GO" id="GO:0005524">
    <property type="term" value="F:ATP binding"/>
    <property type="evidence" value="ECO:0007669"/>
    <property type="project" value="UniProtKB-KW"/>
</dbReference>
<dbReference type="GO" id="GO:0016887">
    <property type="term" value="F:ATP hydrolysis activity"/>
    <property type="evidence" value="ECO:0007669"/>
    <property type="project" value="InterPro"/>
</dbReference>
<dbReference type="GO" id="GO:0042802">
    <property type="term" value="F:identical protein binding"/>
    <property type="evidence" value="ECO:0007669"/>
    <property type="project" value="Ensembl"/>
</dbReference>
<dbReference type="GO" id="GO:1990830">
    <property type="term" value="P:cellular response to leukemia inhibitory factor"/>
    <property type="evidence" value="ECO:0000270"/>
    <property type="project" value="MGI"/>
</dbReference>
<dbReference type="GO" id="GO:0009235">
    <property type="term" value="P:cobalamin metabolic process"/>
    <property type="evidence" value="ECO:0000250"/>
    <property type="project" value="UniProtKB"/>
</dbReference>
<dbReference type="GO" id="GO:0015889">
    <property type="term" value="P:cobalamin transport"/>
    <property type="evidence" value="ECO:0000250"/>
    <property type="project" value="UniProtKB"/>
</dbReference>
<dbReference type="CDD" id="cd03223">
    <property type="entry name" value="ABCD_peroxisomal_ALDP"/>
    <property type="match status" value="1"/>
</dbReference>
<dbReference type="FunFam" id="1.20.1560.10:FF:000064">
    <property type="entry name" value="ATP-binding cassette sub-family D member 4"/>
    <property type="match status" value="1"/>
</dbReference>
<dbReference type="Gene3D" id="1.20.1560.10">
    <property type="entry name" value="ABC transporter type 1, transmembrane domain"/>
    <property type="match status" value="1"/>
</dbReference>
<dbReference type="Gene3D" id="3.40.50.300">
    <property type="entry name" value="P-loop containing nucleotide triphosphate hydrolases"/>
    <property type="match status" value="1"/>
</dbReference>
<dbReference type="InterPro" id="IPR003593">
    <property type="entry name" value="AAA+_ATPase"/>
</dbReference>
<dbReference type="InterPro" id="IPR011527">
    <property type="entry name" value="ABC1_TM_dom"/>
</dbReference>
<dbReference type="InterPro" id="IPR036640">
    <property type="entry name" value="ABC1_TM_sf"/>
</dbReference>
<dbReference type="InterPro" id="IPR003439">
    <property type="entry name" value="ABC_transporter-like_ATP-bd"/>
</dbReference>
<dbReference type="InterPro" id="IPR017871">
    <property type="entry name" value="ABC_transporter-like_CS"/>
</dbReference>
<dbReference type="InterPro" id="IPR050835">
    <property type="entry name" value="ABC_transporter_sub-D"/>
</dbReference>
<dbReference type="InterPro" id="IPR027417">
    <property type="entry name" value="P-loop_NTPase"/>
</dbReference>
<dbReference type="PANTHER" id="PTHR11384">
    <property type="entry name" value="ATP-BINDING CASSETTE, SUB-FAMILY D MEMBER"/>
    <property type="match status" value="1"/>
</dbReference>
<dbReference type="PANTHER" id="PTHR11384:SF59">
    <property type="entry name" value="LYSOSOMAL COBALAMIN TRANSPORTER ABCD4"/>
    <property type="match status" value="1"/>
</dbReference>
<dbReference type="Pfam" id="PF06472">
    <property type="entry name" value="ABC_membrane_2"/>
    <property type="match status" value="1"/>
</dbReference>
<dbReference type="Pfam" id="PF00005">
    <property type="entry name" value="ABC_tran"/>
    <property type="match status" value="1"/>
</dbReference>
<dbReference type="SMART" id="SM00382">
    <property type="entry name" value="AAA"/>
    <property type="match status" value="1"/>
</dbReference>
<dbReference type="SUPFAM" id="SSF90123">
    <property type="entry name" value="ABC transporter transmembrane region"/>
    <property type="match status" value="1"/>
</dbReference>
<dbReference type="SUPFAM" id="SSF52540">
    <property type="entry name" value="P-loop containing nucleoside triphosphate hydrolases"/>
    <property type="match status" value="1"/>
</dbReference>
<dbReference type="PROSITE" id="PS50929">
    <property type="entry name" value="ABC_TM1F"/>
    <property type="match status" value="1"/>
</dbReference>
<dbReference type="PROSITE" id="PS00211">
    <property type="entry name" value="ABC_TRANSPORTER_1"/>
    <property type="match status" value="1"/>
</dbReference>
<dbReference type="PROSITE" id="PS50893">
    <property type="entry name" value="ABC_TRANSPORTER_2"/>
    <property type="match status" value="1"/>
</dbReference>
<organism>
    <name type="scientific">Mus musculus</name>
    <name type="common">Mouse</name>
    <dbReference type="NCBI Taxonomy" id="10090"/>
    <lineage>
        <taxon>Eukaryota</taxon>
        <taxon>Metazoa</taxon>
        <taxon>Chordata</taxon>
        <taxon>Craniata</taxon>
        <taxon>Vertebrata</taxon>
        <taxon>Euteleostomi</taxon>
        <taxon>Mammalia</taxon>
        <taxon>Eutheria</taxon>
        <taxon>Euarchontoglires</taxon>
        <taxon>Glires</taxon>
        <taxon>Rodentia</taxon>
        <taxon>Myomorpha</taxon>
        <taxon>Muroidea</taxon>
        <taxon>Muridae</taxon>
        <taxon>Murinae</taxon>
        <taxon>Mus</taxon>
        <taxon>Mus</taxon>
    </lineage>
</organism>
<feature type="chain" id="PRO_0000093313" description="Lysosomal cobalamin transporter ABCD4">
    <location>
        <begin position="1"/>
        <end position="606"/>
    </location>
</feature>
<feature type="transmembrane region" description="Helical" evidence="4">
    <location>
        <begin position="43"/>
        <end position="63"/>
    </location>
</feature>
<feature type="transmembrane region" description="Helical" evidence="4">
    <location>
        <begin position="76"/>
        <end position="96"/>
    </location>
</feature>
<feature type="transmembrane region" description="Helical" evidence="4">
    <location>
        <begin position="190"/>
        <end position="210"/>
    </location>
</feature>
<feature type="transmembrane region" description="Helical" evidence="4">
    <location>
        <begin position="279"/>
        <end position="299"/>
    </location>
</feature>
<feature type="transmembrane region" description="Helical" evidence="4">
    <location>
        <begin position="314"/>
        <end position="334"/>
    </location>
</feature>
<feature type="domain" description="ABC transmembrane type-1" evidence="4">
    <location>
        <begin position="39"/>
        <end position="332"/>
    </location>
</feature>
<feature type="domain" description="ABC transporter" evidence="3">
    <location>
        <begin position="389"/>
        <end position="603"/>
    </location>
</feature>
<feature type="binding site" evidence="3">
    <location>
        <begin position="421"/>
        <end position="428"/>
    </location>
    <ligand>
        <name>ATP</name>
        <dbReference type="ChEBI" id="CHEBI:30616"/>
    </ligand>
</feature>
<feature type="sequence conflict" description="In Ref. 1; CAA04570." evidence="5" ref="1">
    <original>F</original>
    <variation>L</variation>
    <location>
        <position position="43"/>
    </location>
</feature>
<protein>
    <recommendedName>
        <fullName evidence="1">Lysosomal cobalamin transporter ABCD4</fullName>
        <ecNumber evidence="1">7.6.2.8</ecNumber>
    </recommendedName>
    <alternativeName>
        <fullName>ATP-binding cassette sub-family D member 4</fullName>
    </alternativeName>
    <alternativeName>
        <fullName>PMP70-related protein</fullName>
        <shortName>P70R</shortName>
    </alternativeName>
    <alternativeName>
        <fullName>Peroxisomal membrane protein 1-like</fullName>
        <shortName>PXMP1-L</shortName>
    </alternativeName>
    <alternativeName>
        <fullName>Peroxisomal membrane protein 69</fullName>
        <shortName>PMP69</shortName>
    </alternativeName>
</protein>
<evidence type="ECO:0000250" key="1">
    <source>
        <dbReference type="UniProtKB" id="O14678"/>
    </source>
</evidence>
<evidence type="ECO:0000255" key="2"/>
<evidence type="ECO:0000255" key="3">
    <source>
        <dbReference type="PROSITE-ProRule" id="PRU00434"/>
    </source>
</evidence>
<evidence type="ECO:0000255" key="4">
    <source>
        <dbReference type="PROSITE-ProRule" id="PRU00441"/>
    </source>
</evidence>
<evidence type="ECO:0000305" key="5"/>
<evidence type="ECO:0000312" key="6">
    <source>
        <dbReference type="MGI" id="MGI:1349217"/>
    </source>
</evidence>
<reference key="1">
    <citation type="journal article" date="1998" name="FEBS Lett.">
        <title>The mouse gene encoding the peroxisomal membrane protein 1-like protein (PXMP1-L): cDNA cloning, genomic organization and comparative expression studies.</title>
        <authorList>
            <person name="Holzinger A."/>
            <person name="Muntau A."/>
            <person name="Mayerhofer P."/>
            <person name="Kammerer S."/>
            <person name="Albet S."/>
            <person name="Bugaut M."/>
            <person name="Roscher A.A."/>
        </authorList>
    </citation>
    <scope>NUCLEOTIDE SEQUENCE [MRNA]</scope>
</reference>
<reference key="2">
    <citation type="journal article" date="2009" name="PLoS Biol.">
        <title>Lineage-specific biology revealed by a finished genome assembly of the mouse.</title>
        <authorList>
            <person name="Church D.M."/>
            <person name="Goodstadt L."/>
            <person name="Hillier L.W."/>
            <person name="Zody M.C."/>
            <person name="Goldstein S."/>
            <person name="She X."/>
            <person name="Bult C.J."/>
            <person name="Agarwala R."/>
            <person name="Cherry J.L."/>
            <person name="DiCuccio M."/>
            <person name="Hlavina W."/>
            <person name="Kapustin Y."/>
            <person name="Meric P."/>
            <person name="Maglott D."/>
            <person name="Birtle Z."/>
            <person name="Marques A.C."/>
            <person name="Graves T."/>
            <person name="Zhou S."/>
            <person name="Teague B."/>
            <person name="Potamousis K."/>
            <person name="Churas C."/>
            <person name="Place M."/>
            <person name="Herschleb J."/>
            <person name="Runnheim R."/>
            <person name="Forrest D."/>
            <person name="Amos-Landgraf J."/>
            <person name="Schwartz D.C."/>
            <person name="Cheng Z."/>
            <person name="Lindblad-Toh K."/>
            <person name="Eichler E.E."/>
            <person name="Ponting C.P."/>
        </authorList>
    </citation>
    <scope>NUCLEOTIDE SEQUENCE [LARGE SCALE GENOMIC DNA]</scope>
    <source>
        <strain>C57BL/6J</strain>
    </source>
</reference>
<reference key="3">
    <citation type="journal article" date="2010" name="Cell">
        <title>A tissue-specific atlas of mouse protein phosphorylation and expression.</title>
        <authorList>
            <person name="Huttlin E.L."/>
            <person name="Jedrychowski M.P."/>
            <person name="Elias J.E."/>
            <person name="Goswami T."/>
            <person name="Rad R."/>
            <person name="Beausoleil S.A."/>
            <person name="Villen J."/>
            <person name="Haas W."/>
            <person name="Sowa M.E."/>
            <person name="Gygi S.P."/>
        </authorList>
    </citation>
    <scope>IDENTIFICATION BY MASS SPECTROMETRY [LARGE SCALE ANALYSIS]</scope>
    <source>
        <tissue>Kidney</tissue>
        <tissue>Lung</tissue>
    </source>
</reference>
<keyword id="KW-0067">ATP-binding</keyword>
<keyword id="KW-0256">Endoplasmic reticulum</keyword>
<keyword id="KW-0458">Lysosome</keyword>
<keyword id="KW-0472">Membrane</keyword>
<keyword id="KW-0547">Nucleotide-binding</keyword>
<keyword id="KW-1185">Reference proteome</keyword>
<keyword id="KW-1278">Translocase</keyword>
<keyword id="KW-0812">Transmembrane</keyword>
<keyword id="KW-1133">Transmembrane helix</keyword>
<keyword id="KW-0813">Transport</keyword>